<accession>B4S0R8</accession>
<accession>F2G6N6</accession>
<reference key="1">
    <citation type="journal article" date="2008" name="ISME J.">
        <title>Comparative genomics of two ecotypes of the marine planktonic copiotroph Alteromonas macleodii suggests alternative lifestyles associated with different kinds of particulate organic matter.</title>
        <authorList>
            <person name="Ivars-Martinez E."/>
            <person name="Martin-Cuadrado A.-B."/>
            <person name="D'Auria G."/>
            <person name="Mira A."/>
            <person name="Ferriera S."/>
            <person name="Johnson J."/>
            <person name="Friedman R."/>
            <person name="Rodriguez-Valera F."/>
        </authorList>
    </citation>
    <scope>NUCLEOTIDE SEQUENCE [LARGE SCALE GENOMIC DNA]</scope>
    <source>
        <strain>DSM 17117 / CIP 110805 / LMG 28347 / Deep ecotype</strain>
    </source>
</reference>
<protein>
    <recommendedName>
        <fullName evidence="1">tRNA-2-methylthio-N(6)-dimethylallyladenosine synthase</fullName>
        <ecNumber evidence="1">2.8.4.3</ecNumber>
    </recommendedName>
    <alternativeName>
        <fullName evidence="1">(Dimethylallyl)adenosine tRNA methylthiotransferase MiaB</fullName>
    </alternativeName>
    <alternativeName>
        <fullName evidence="1">tRNA-i(6)A37 methylthiotransferase</fullName>
    </alternativeName>
</protein>
<feature type="chain" id="PRO_0000374106" description="tRNA-2-methylthio-N(6)-dimethylallyladenosine synthase">
    <location>
        <begin position="1"/>
        <end position="477"/>
    </location>
</feature>
<feature type="domain" description="MTTase N-terminal" evidence="1">
    <location>
        <begin position="3"/>
        <end position="120"/>
    </location>
</feature>
<feature type="domain" description="Radical SAM core" evidence="2">
    <location>
        <begin position="143"/>
        <end position="375"/>
    </location>
</feature>
<feature type="domain" description="TRAM" evidence="1">
    <location>
        <begin position="378"/>
        <end position="441"/>
    </location>
</feature>
<feature type="binding site" evidence="1">
    <location>
        <position position="12"/>
    </location>
    <ligand>
        <name>[4Fe-4S] cluster</name>
        <dbReference type="ChEBI" id="CHEBI:49883"/>
        <label>1</label>
    </ligand>
</feature>
<feature type="binding site" evidence="1">
    <location>
        <position position="49"/>
    </location>
    <ligand>
        <name>[4Fe-4S] cluster</name>
        <dbReference type="ChEBI" id="CHEBI:49883"/>
        <label>1</label>
    </ligand>
</feature>
<feature type="binding site" evidence="1">
    <location>
        <position position="83"/>
    </location>
    <ligand>
        <name>[4Fe-4S] cluster</name>
        <dbReference type="ChEBI" id="CHEBI:49883"/>
        <label>1</label>
    </ligand>
</feature>
<feature type="binding site" evidence="1">
    <location>
        <position position="157"/>
    </location>
    <ligand>
        <name>[4Fe-4S] cluster</name>
        <dbReference type="ChEBI" id="CHEBI:49883"/>
        <label>2</label>
        <note>4Fe-4S-S-AdoMet</note>
    </ligand>
</feature>
<feature type="binding site" evidence="1">
    <location>
        <position position="161"/>
    </location>
    <ligand>
        <name>[4Fe-4S] cluster</name>
        <dbReference type="ChEBI" id="CHEBI:49883"/>
        <label>2</label>
        <note>4Fe-4S-S-AdoMet</note>
    </ligand>
</feature>
<feature type="binding site" evidence="1">
    <location>
        <position position="164"/>
    </location>
    <ligand>
        <name>[4Fe-4S] cluster</name>
        <dbReference type="ChEBI" id="CHEBI:49883"/>
        <label>2</label>
        <note>4Fe-4S-S-AdoMet</note>
    </ligand>
</feature>
<keyword id="KW-0004">4Fe-4S</keyword>
<keyword id="KW-0963">Cytoplasm</keyword>
<keyword id="KW-0408">Iron</keyword>
<keyword id="KW-0411">Iron-sulfur</keyword>
<keyword id="KW-0479">Metal-binding</keyword>
<keyword id="KW-0949">S-adenosyl-L-methionine</keyword>
<keyword id="KW-0808">Transferase</keyword>
<keyword id="KW-0819">tRNA processing</keyword>
<name>MIAB_ALTMD</name>
<sequence length="477" mass="53273">MTKKLYIKTWGCQMNEYDSEKMADLLDSTHGFSAAQSAEEADVILLNTCSIREKAQEKVFHQLGRWKTLKQDKPELIIGVGGCVASQEGDTIRQRAPFVDLVFGPQTLHRLPEMINELKGGAKSVIDVSFPEIEKFDRLPEPRAEGPTAFVSIMEGCSKYCTFCVVPYTRGEEVSRPVDDVLLEIAQLAGQGVREVNLLGQNVNAYRGENYDGTICRFSELLELVAAIDGIDRIRYTTSHPVEFTDDIIDAYASIPELVDHLHLPVQSGSDRILNLMKRGHTALEYKSKMRKLKKIRPNISLSSDFIIGFPGETDADFEATMDLIQAVDYDLSFSFIYSARPGTPAADAVDDVTEETKKQRLHLLQQRITQQALRIARHMVGTEQRILVEGPSKKNPMELSGRTENNRVVNFEGTPDMIGEFVDVNITDVFTNSLRGEVVRRESEMGLRVAVSPQSIMAKHQADMPDELGVGQFSPA</sequence>
<dbReference type="EC" id="2.8.4.3" evidence="1"/>
<dbReference type="EMBL" id="CP001103">
    <property type="protein sequence ID" value="AEA97573.1"/>
    <property type="molecule type" value="Genomic_DNA"/>
</dbReference>
<dbReference type="RefSeq" id="WP_012517915.1">
    <property type="nucleotide sequence ID" value="NC_011138.3"/>
</dbReference>
<dbReference type="SMR" id="B4S0R8"/>
<dbReference type="KEGG" id="amc:MADE_1007155"/>
<dbReference type="HOGENOM" id="CLU_018697_2_0_6"/>
<dbReference type="Proteomes" id="UP000001870">
    <property type="component" value="Chromosome"/>
</dbReference>
<dbReference type="GO" id="GO:0005829">
    <property type="term" value="C:cytosol"/>
    <property type="evidence" value="ECO:0007669"/>
    <property type="project" value="TreeGrafter"/>
</dbReference>
<dbReference type="GO" id="GO:0051539">
    <property type="term" value="F:4 iron, 4 sulfur cluster binding"/>
    <property type="evidence" value="ECO:0007669"/>
    <property type="project" value="UniProtKB-UniRule"/>
</dbReference>
<dbReference type="GO" id="GO:0046872">
    <property type="term" value="F:metal ion binding"/>
    <property type="evidence" value="ECO:0007669"/>
    <property type="project" value="UniProtKB-KW"/>
</dbReference>
<dbReference type="GO" id="GO:0035597">
    <property type="term" value="F:N6-isopentenyladenosine methylthiotransferase activity"/>
    <property type="evidence" value="ECO:0007669"/>
    <property type="project" value="TreeGrafter"/>
</dbReference>
<dbReference type="CDD" id="cd01335">
    <property type="entry name" value="Radical_SAM"/>
    <property type="match status" value="1"/>
</dbReference>
<dbReference type="FunFam" id="3.40.50.12160:FF:000001">
    <property type="entry name" value="tRNA-2-methylthio-N(6)-dimethylallyladenosine synthase"/>
    <property type="match status" value="1"/>
</dbReference>
<dbReference type="FunFam" id="3.80.30.20:FF:000001">
    <property type="entry name" value="tRNA-2-methylthio-N(6)-dimethylallyladenosine synthase 2"/>
    <property type="match status" value="1"/>
</dbReference>
<dbReference type="Gene3D" id="3.40.50.12160">
    <property type="entry name" value="Methylthiotransferase, N-terminal domain"/>
    <property type="match status" value="1"/>
</dbReference>
<dbReference type="Gene3D" id="3.80.30.20">
    <property type="entry name" value="tm_1862 like domain"/>
    <property type="match status" value="1"/>
</dbReference>
<dbReference type="HAMAP" id="MF_01864">
    <property type="entry name" value="tRNA_metthiotr_MiaB"/>
    <property type="match status" value="1"/>
</dbReference>
<dbReference type="InterPro" id="IPR006638">
    <property type="entry name" value="Elp3/MiaA/NifB-like_rSAM"/>
</dbReference>
<dbReference type="InterPro" id="IPR005839">
    <property type="entry name" value="Methylthiotransferase"/>
</dbReference>
<dbReference type="InterPro" id="IPR020612">
    <property type="entry name" value="Methylthiotransferase_CS"/>
</dbReference>
<dbReference type="InterPro" id="IPR013848">
    <property type="entry name" value="Methylthiotransferase_N"/>
</dbReference>
<dbReference type="InterPro" id="IPR038135">
    <property type="entry name" value="Methylthiotransferase_N_sf"/>
</dbReference>
<dbReference type="InterPro" id="IPR006463">
    <property type="entry name" value="MiaB_methiolase"/>
</dbReference>
<dbReference type="InterPro" id="IPR007197">
    <property type="entry name" value="rSAM"/>
</dbReference>
<dbReference type="InterPro" id="IPR023404">
    <property type="entry name" value="rSAM_horseshoe"/>
</dbReference>
<dbReference type="InterPro" id="IPR002792">
    <property type="entry name" value="TRAM_dom"/>
</dbReference>
<dbReference type="NCBIfam" id="TIGR01574">
    <property type="entry name" value="miaB-methiolase"/>
    <property type="match status" value="1"/>
</dbReference>
<dbReference type="NCBIfam" id="TIGR00089">
    <property type="entry name" value="MiaB/RimO family radical SAM methylthiotransferase"/>
    <property type="match status" value="1"/>
</dbReference>
<dbReference type="PANTHER" id="PTHR43020">
    <property type="entry name" value="CDK5 REGULATORY SUBUNIT-ASSOCIATED PROTEIN 1"/>
    <property type="match status" value="1"/>
</dbReference>
<dbReference type="PANTHER" id="PTHR43020:SF2">
    <property type="entry name" value="MITOCHONDRIAL TRNA METHYLTHIOTRANSFERASE CDK5RAP1"/>
    <property type="match status" value="1"/>
</dbReference>
<dbReference type="Pfam" id="PF04055">
    <property type="entry name" value="Radical_SAM"/>
    <property type="match status" value="1"/>
</dbReference>
<dbReference type="Pfam" id="PF01938">
    <property type="entry name" value="TRAM"/>
    <property type="match status" value="1"/>
</dbReference>
<dbReference type="Pfam" id="PF00919">
    <property type="entry name" value="UPF0004"/>
    <property type="match status" value="1"/>
</dbReference>
<dbReference type="SFLD" id="SFLDF00273">
    <property type="entry name" value="(dimethylallyl)adenosine_tRNA"/>
    <property type="match status" value="1"/>
</dbReference>
<dbReference type="SFLD" id="SFLDG01082">
    <property type="entry name" value="B12-binding_domain_containing"/>
    <property type="match status" value="1"/>
</dbReference>
<dbReference type="SFLD" id="SFLDS00029">
    <property type="entry name" value="Radical_SAM"/>
    <property type="match status" value="1"/>
</dbReference>
<dbReference type="SMART" id="SM00729">
    <property type="entry name" value="Elp3"/>
    <property type="match status" value="1"/>
</dbReference>
<dbReference type="SUPFAM" id="SSF102114">
    <property type="entry name" value="Radical SAM enzymes"/>
    <property type="match status" value="1"/>
</dbReference>
<dbReference type="PROSITE" id="PS51449">
    <property type="entry name" value="MTTASE_N"/>
    <property type="match status" value="1"/>
</dbReference>
<dbReference type="PROSITE" id="PS01278">
    <property type="entry name" value="MTTASE_RADICAL"/>
    <property type="match status" value="1"/>
</dbReference>
<dbReference type="PROSITE" id="PS51918">
    <property type="entry name" value="RADICAL_SAM"/>
    <property type="match status" value="1"/>
</dbReference>
<dbReference type="PROSITE" id="PS50926">
    <property type="entry name" value="TRAM"/>
    <property type="match status" value="1"/>
</dbReference>
<gene>
    <name evidence="1" type="primary">miaB</name>
    <name type="ordered locus">MADE_1007155</name>
</gene>
<organism>
    <name type="scientific">Alteromonas mediterranea (strain DSM 17117 / CIP 110805 / LMG 28347 / Deep ecotype)</name>
    <dbReference type="NCBI Taxonomy" id="1774373"/>
    <lineage>
        <taxon>Bacteria</taxon>
        <taxon>Pseudomonadati</taxon>
        <taxon>Pseudomonadota</taxon>
        <taxon>Gammaproteobacteria</taxon>
        <taxon>Alteromonadales</taxon>
        <taxon>Alteromonadaceae</taxon>
        <taxon>Alteromonas/Salinimonas group</taxon>
        <taxon>Alteromonas</taxon>
    </lineage>
</organism>
<comment type="function">
    <text evidence="1">Catalyzes the methylthiolation of N6-(dimethylallyl)adenosine (i(6)A), leading to the formation of 2-methylthio-N6-(dimethylallyl)adenosine (ms(2)i(6)A) at position 37 in tRNAs that read codons beginning with uridine.</text>
</comment>
<comment type="catalytic activity">
    <reaction evidence="1">
        <text>N(6)-dimethylallyladenosine(37) in tRNA + (sulfur carrier)-SH + AH2 + 2 S-adenosyl-L-methionine = 2-methylsulfanyl-N(6)-dimethylallyladenosine(37) in tRNA + (sulfur carrier)-H + 5'-deoxyadenosine + L-methionine + A + S-adenosyl-L-homocysteine + 2 H(+)</text>
        <dbReference type="Rhea" id="RHEA:37067"/>
        <dbReference type="Rhea" id="RHEA-COMP:10375"/>
        <dbReference type="Rhea" id="RHEA-COMP:10376"/>
        <dbReference type="Rhea" id="RHEA-COMP:14737"/>
        <dbReference type="Rhea" id="RHEA-COMP:14739"/>
        <dbReference type="ChEBI" id="CHEBI:13193"/>
        <dbReference type="ChEBI" id="CHEBI:15378"/>
        <dbReference type="ChEBI" id="CHEBI:17319"/>
        <dbReference type="ChEBI" id="CHEBI:17499"/>
        <dbReference type="ChEBI" id="CHEBI:29917"/>
        <dbReference type="ChEBI" id="CHEBI:57844"/>
        <dbReference type="ChEBI" id="CHEBI:57856"/>
        <dbReference type="ChEBI" id="CHEBI:59789"/>
        <dbReference type="ChEBI" id="CHEBI:64428"/>
        <dbReference type="ChEBI" id="CHEBI:74415"/>
        <dbReference type="ChEBI" id="CHEBI:74417"/>
        <dbReference type="EC" id="2.8.4.3"/>
    </reaction>
</comment>
<comment type="cofactor">
    <cofactor evidence="1">
        <name>[4Fe-4S] cluster</name>
        <dbReference type="ChEBI" id="CHEBI:49883"/>
    </cofactor>
    <text evidence="1">Binds 2 [4Fe-4S] clusters. One cluster is coordinated with 3 cysteines and an exchangeable S-adenosyl-L-methionine.</text>
</comment>
<comment type="subunit">
    <text evidence="1">Monomer.</text>
</comment>
<comment type="subcellular location">
    <subcellularLocation>
        <location evidence="1">Cytoplasm</location>
    </subcellularLocation>
</comment>
<comment type="similarity">
    <text evidence="1">Belongs to the methylthiotransferase family. MiaB subfamily.</text>
</comment>
<evidence type="ECO:0000255" key="1">
    <source>
        <dbReference type="HAMAP-Rule" id="MF_01864"/>
    </source>
</evidence>
<evidence type="ECO:0000255" key="2">
    <source>
        <dbReference type="PROSITE-ProRule" id="PRU01266"/>
    </source>
</evidence>
<proteinExistence type="inferred from homology"/>